<name>PSTB_BRADU</name>
<organism>
    <name type="scientific">Bradyrhizobium diazoefficiens (strain JCM 10833 / BCRC 13528 / IAM 13628 / NBRC 14792 / USDA 110)</name>
    <dbReference type="NCBI Taxonomy" id="224911"/>
    <lineage>
        <taxon>Bacteria</taxon>
        <taxon>Pseudomonadati</taxon>
        <taxon>Pseudomonadota</taxon>
        <taxon>Alphaproteobacteria</taxon>
        <taxon>Hyphomicrobiales</taxon>
        <taxon>Nitrobacteraceae</taxon>
        <taxon>Bradyrhizobium</taxon>
    </lineage>
</organism>
<accession>Q89VF2</accession>
<comment type="function">
    <text evidence="1">Part of the ABC transporter complex PstSACB involved in phosphate import. Responsible for energy coupling to the transport system.</text>
</comment>
<comment type="catalytic activity">
    <reaction evidence="1">
        <text>phosphate(out) + ATP + H2O = ADP + 2 phosphate(in) + H(+)</text>
        <dbReference type="Rhea" id="RHEA:24440"/>
        <dbReference type="ChEBI" id="CHEBI:15377"/>
        <dbReference type="ChEBI" id="CHEBI:15378"/>
        <dbReference type="ChEBI" id="CHEBI:30616"/>
        <dbReference type="ChEBI" id="CHEBI:43474"/>
        <dbReference type="ChEBI" id="CHEBI:456216"/>
        <dbReference type="EC" id="7.3.2.1"/>
    </reaction>
</comment>
<comment type="subunit">
    <text evidence="1">The complex is composed of two ATP-binding proteins (PstB), two transmembrane proteins (PstC and PstA) and a solute-binding protein (PstS).</text>
</comment>
<comment type="subcellular location">
    <subcellularLocation>
        <location evidence="1">Cell inner membrane</location>
        <topology evidence="1">Peripheral membrane protein</topology>
    </subcellularLocation>
</comment>
<comment type="similarity">
    <text evidence="1">Belongs to the ABC transporter superfamily. Phosphate importer (TC 3.A.1.7) family.</text>
</comment>
<dbReference type="EC" id="7.3.2.1" evidence="1"/>
<dbReference type="EMBL" id="BA000040">
    <property type="protein sequence ID" value="BAC46359.1"/>
    <property type="molecule type" value="Genomic_DNA"/>
</dbReference>
<dbReference type="RefSeq" id="NP_767734.1">
    <property type="nucleotide sequence ID" value="NC_004463.1"/>
</dbReference>
<dbReference type="RefSeq" id="WP_011083914.1">
    <property type="nucleotide sequence ID" value="NC_004463.1"/>
</dbReference>
<dbReference type="SMR" id="Q89VF2"/>
<dbReference type="FunCoup" id="Q89VF2">
    <property type="interactions" value="537"/>
</dbReference>
<dbReference type="STRING" id="224911.AAV28_02330"/>
<dbReference type="EnsemblBacteria" id="BAC46359">
    <property type="protein sequence ID" value="BAC46359"/>
    <property type="gene ID" value="BAC46359"/>
</dbReference>
<dbReference type="GeneID" id="46488365"/>
<dbReference type="KEGG" id="bja:blr1094"/>
<dbReference type="PATRIC" id="fig|224911.44.peg.493"/>
<dbReference type="eggNOG" id="COG1117">
    <property type="taxonomic scope" value="Bacteria"/>
</dbReference>
<dbReference type="HOGENOM" id="CLU_000604_1_22_5"/>
<dbReference type="InParanoid" id="Q89VF2"/>
<dbReference type="OrthoDB" id="9802264at2"/>
<dbReference type="PhylomeDB" id="Q89VF2"/>
<dbReference type="Proteomes" id="UP000002526">
    <property type="component" value="Chromosome"/>
</dbReference>
<dbReference type="GO" id="GO:0005886">
    <property type="term" value="C:plasma membrane"/>
    <property type="evidence" value="ECO:0007669"/>
    <property type="project" value="UniProtKB-SubCell"/>
</dbReference>
<dbReference type="GO" id="GO:0005524">
    <property type="term" value="F:ATP binding"/>
    <property type="evidence" value="ECO:0007669"/>
    <property type="project" value="UniProtKB-KW"/>
</dbReference>
<dbReference type="GO" id="GO:0016887">
    <property type="term" value="F:ATP hydrolysis activity"/>
    <property type="evidence" value="ECO:0007669"/>
    <property type="project" value="InterPro"/>
</dbReference>
<dbReference type="GO" id="GO:0015415">
    <property type="term" value="F:ATPase-coupled phosphate ion transmembrane transporter activity"/>
    <property type="evidence" value="ECO:0007669"/>
    <property type="project" value="UniProtKB-EC"/>
</dbReference>
<dbReference type="GO" id="GO:0035435">
    <property type="term" value="P:phosphate ion transmembrane transport"/>
    <property type="evidence" value="ECO:0007669"/>
    <property type="project" value="InterPro"/>
</dbReference>
<dbReference type="CDD" id="cd03260">
    <property type="entry name" value="ABC_PstB_phosphate_transporter"/>
    <property type="match status" value="1"/>
</dbReference>
<dbReference type="FunFam" id="3.40.50.300:FF:000132">
    <property type="entry name" value="Phosphate import ATP-binding protein PstB"/>
    <property type="match status" value="1"/>
</dbReference>
<dbReference type="Gene3D" id="3.40.50.300">
    <property type="entry name" value="P-loop containing nucleotide triphosphate hydrolases"/>
    <property type="match status" value="1"/>
</dbReference>
<dbReference type="InterPro" id="IPR003593">
    <property type="entry name" value="AAA+_ATPase"/>
</dbReference>
<dbReference type="InterPro" id="IPR003439">
    <property type="entry name" value="ABC_transporter-like_ATP-bd"/>
</dbReference>
<dbReference type="InterPro" id="IPR017871">
    <property type="entry name" value="ABC_transporter-like_CS"/>
</dbReference>
<dbReference type="InterPro" id="IPR027417">
    <property type="entry name" value="P-loop_NTPase"/>
</dbReference>
<dbReference type="InterPro" id="IPR005670">
    <property type="entry name" value="PstB-like"/>
</dbReference>
<dbReference type="NCBIfam" id="TIGR00972">
    <property type="entry name" value="3a0107s01c2"/>
    <property type="match status" value="1"/>
</dbReference>
<dbReference type="PANTHER" id="PTHR43423">
    <property type="entry name" value="ABC TRANSPORTER I FAMILY MEMBER 17"/>
    <property type="match status" value="1"/>
</dbReference>
<dbReference type="PANTHER" id="PTHR43423:SF3">
    <property type="entry name" value="PHOSPHATE IMPORT ATP-BINDING PROTEIN PSTB"/>
    <property type="match status" value="1"/>
</dbReference>
<dbReference type="Pfam" id="PF00005">
    <property type="entry name" value="ABC_tran"/>
    <property type="match status" value="1"/>
</dbReference>
<dbReference type="SMART" id="SM00382">
    <property type="entry name" value="AAA"/>
    <property type="match status" value="1"/>
</dbReference>
<dbReference type="SUPFAM" id="SSF52540">
    <property type="entry name" value="P-loop containing nucleoside triphosphate hydrolases"/>
    <property type="match status" value="1"/>
</dbReference>
<dbReference type="PROSITE" id="PS00211">
    <property type="entry name" value="ABC_TRANSPORTER_1"/>
    <property type="match status" value="1"/>
</dbReference>
<dbReference type="PROSITE" id="PS50893">
    <property type="entry name" value="ABC_TRANSPORTER_2"/>
    <property type="match status" value="1"/>
</dbReference>
<dbReference type="PROSITE" id="PS51238">
    <property type="entry name" value="PSTB"/>
    <property type="match status" value="1"/>
</dbReference>
<proteinExistence type="inferred from homology"/>
<gene>
    <name evidence="1" type="primary">pstB</name>
    <name type="ordered locus">blr1094</name>
</gene>
<reference key="1">
    <citation type="journal article" date="2002" name="DNA Res.">
        <title>Complete genomic sequence of nitrogen-fixing symbiotic bacterium Bradyrhizobium japonicum USDA110.</title>
        <authorList>
            <person name="Kaneko T."/>
            <person name="Nakamura Y."/>
            <person name="Sato S."/>
            <person name="Minamisawa K."/>
            <person name="Uchiumi T."/>
            <person name="Sasamoto S."/>
            <person name="Watanabe A."/>
            <person name="Idesawa K."/>
            <person name="Iriguchi M."/>
            <person name="Kawashima K."/>
            <person name="Kohara M."/>
            <person name="Matsumoto M."/>
            <person name="Shimpo S."/>
            <person name="Tsuruoka H."/>
            <person name="Wada T."/>
            <person name="Yamada M."/>
            <person name="Tabata S."/>
        </authorList>
    </citation>
    <scope>NUCLEOTIDE SEQUENCE [LARGE SCALE GENOMIC DNA]</scope>
    <source>
        <strain>JCM 10833 / BCRC 13528 / IAM 13628 / NBRC 14792 / USDA 110</strain>
    </source>
</reference>
<feature type="chain" id="PRO_0000092792" description="Phosphate import ATP-binding protein PstB">
    <location>
        <begin position="1"/>
        <end position="273"/>
    </location>
</feature>
<feature type="domain" description="ABC transporter" evidence="1">
    <location>
        <begin position="27"/>
        <end position="268"/>
    </location>
</feature>
<feature type="binding site" evidence="1">
    <location>
        <begin position="59"/>
        <end position="66"/>
    </location>
    <ligand>
        <name>ATP</name>
        <dbReference type="ChEBI" id="CHEBI:30616"/>
    </ligand>
</feature>
<keyword id="KW-0067">ATP-binding</keyword>
<keyword id="KW-0997">Cell inner membrane</keyword>
<keyword id="KW-1003">Cell membrane</keyword>
<keyword id="KW-0472">Membrane</keyword>
<keyword id="KW-0547">Nucleotide-binding</keyword>
<keyword id="KW-0592">Phosphate transport</keyword>
<keyword id="KW-1185">Reference proteome</keyword>
<keyword id="KW-1278">Translocase</keyword>
<keyword id="KW-0813">Transport</keyword>
<sequence>MSELSVSMSAAGGLPQAPLLPEAPAKVTVRNLNFYYGEHHALKNINLTLGTNRVTAFIGPSGCGKSTLLRIFNRMYDLYPGQRATGQLMLDQTNILDGKLDLNLLRARVGMVFQKPTPFPMTIYENIAFGIRLYEKISKSEMDDRVEKALRGGALWNEVKDKLNASGLSLSGGQQQRLCIARTVAVRPEVILFDEPCSALDPISTAKVEELIQELSENYTIAIVTHNMQQAARVSDKTAFMYLGELIEFDDTSKIFTSPSDRRTQDYITGRFG</sequence>
<protein>
    <recommendedName>
        <fullName evidence="1">Phosphate import ATP-binding protein PstB</fullName>
        <ecNumber evidence="1">7.3.2.1</ecNumber>
    </recommendedName>
    <alternativeName>
        <fullName evidence="1">ABC phosphate transporter</fullName>
    </alternativeName>
    <alternativeName>
        <fullName evidence="1">Phosphate-transporting ATPase</fullName>
    </alternativeName>
</protein>
<evidence type="ECO:0000255" key="1">
    <source>
        <dbReference type="HAMAP-Rule" id="MF_01702"/>
    </source>
</evidence>